<sequence length="694" mass="77316">MADSYDLTAIRNIGIMAHIDAGKTTTTERILFYSGRVHKMGEVDKGTATMDWMSQEQERGITITSAATACKWKGYFVNIIDTPGHVDFTVEVERSLRVLDGSIGIFCAVAGVQPQSETVWRQADRYHVPRIAYINKMDRVGADFFRVIEMIRKNLSSDAVAIQLPIGVEEAFSGIIDLIDFKAYIYEDESGEQYQERELNPDERSKAQEFRNLLLERLAEYDDSILEKYLEAREISPAEIRSSLRKSCISNQIVPVLCGSSFKNKGVQMLLDAVVSYLPSPLDIPAIEAMDIASGENVRIKPEVDAPLCALAFKLASDPYVGKLTYFRIYSGRIKAGSTLFNSRQDRKERFTRLLKMHANHREEIEEACAGDIVAGVGLKNTATGDTLCSENHLVLLETIDFPQPVIDVAIEAKTRADQERIEESLRRLAEEDPTFQTRQDKESGQMIISGMGELHLEIIIDRLLKEFKVNANIGKPQVAYKESVKKRTAAEVKFDRQAGGRGQYAHVVLEVLPLAEGQGKRFADKSSPEAIPREFIPAVEMGVREALQAGILGGYPVDDVEVVLKGGSYHEVDSNEPAFKIAASMALKEALENAQSVFLEPVMDLEIICPEEYLGDVISDLNARRGRIIALEENRDTKAVKGLVPLAETFGYATSLRSLTQGRASFSMKIKNFAEVPESKSREIIARRYGLPV</sequence>
<proteinExistence type="inferred from homology"/>
<comment type="function">
    <text evidence="1">Catalyzes the GTP-dependent ribosomal translocation step during translation elongation. During this step, the ribosome changes from the pre-translocational (PRE) to the post-translocational (POST) state as the newly formed A-site-bound peptidyl-tRNA and P-site-bound deacylated tRNA move to the P and E sites, respectively. Catalyzes the coordinated movement of the two tRNA molecules, the mRNA and conformational changes in the ribosome.</text>
</comment>
<comment type="subcellular location">
    <subcellularLocation>
        <location evidence="1">Cytoplasm</location>
    </subcellularLocation>
</comment>
<comment type="similarity">
    <text evidence="1">Belongs to the TRAFAC class translation factor GTPase superfamily. Classic translation factor GTPase family. EF-G/EF-2 subfamily.</text>
</comment>
<organism>
    <name type="scientific">Syntrophomonas wolfei subsp. wolfei (strain DSM 2245B / Goettingen)</name>
    <dbReference type="NCBI Taxonomy" id="335541"/>
    <lineage>
        <taxon>Bacteria</taxon>
        <taxon>Bacillati</taxon>
        <taxon>Bacillota</taxon>
        <taxon>Clostridia</taxon>
        <taxon>Eubacteriales</taxon>
        <taxon>Syntrophomonadaceae</taxon>
        <taxon>Syntrophomonas</taxon>
    </lineage>
</organism>
<accession>Q0AUH7</accession>
<evidence type="ECO:0000255" key="1">
    <source>
        <dbReference type="HAMAP-Rule" id="MF_00054"/>
    </source>
</evidence>
<protein>
    <recommendedName>
        <fullName evidence="1">Elongation factor G 2</fullName>
        <shortName evidence="1">EF-G 2</shortName>
    </recommendedName>
</protein>
<dbReference type="EMBL" id="CP000448">
    <property type="protein sequence ID" value="ABI69627.1"/>
    <property type="molecule type" value="Genomic_DNA"/>
</dbReference>
<dbReference type="RefSeq" id="WP_011641711.1">
    <property type="nucleotide sequence ID" value="NC_008346.1"/>
</dbReference>
<dbReference type="SMR" id="Q0AUH7"/>
<dbReference type="STRING" id="335541.Swol_2336"/>
<dbReference type="KEGG" id="swo:Swol_2336"/>
<dbReference type="eggNOG" id="COG0480">
    <property type="taxonomic scope" value="Bacteria"/>
</dbReference>
<dbReference type="HOGENOM" id="CLU_002794_4_1_9"/>
<dbReference type="OrthoDB" id="9804431at2"/>
<dbReference type="Proteomes" id="UP000001968">
    <property type="component" value="Chromosome"/>
</dbReference>
<dbReference type="GO" id="GO:0005737">
    <property type="term" value="C:cytoplasm"/>
    <property type="evidence" value="ECO:0007669"/>
    <property type="project" value="UniProtKB-SubCell"/>
</dbReference>
<dbReference type="GO" id="GO:0005525">
    <property type="term" value="F:GTP binding"/>
    <property type="evidence" value="ECO:0007669"/>
    <property type="project" value="UniProtKB-UniRule"/>
</dbReference>
<dbReference type="GO" id="GO:0003924">
    <property type="term" value="F:GTPase activity"/>
    <property type="evidence" value="ECO:0007669"/>
    <property type="project" value="InterPro"/>
</dbReference>
<dbReference type="GO" id="GO:0003746">
    <property type="term" value="F:translation elongation factor activity"/>
    <property type="evidence" value="ECO:0007669"/>
    <property type="project" value="UniProtKB-UniRule"/>
</dbReference>
<dbReference type="GO" id="GO:0032790">
    <property type="term" value="P:ribosome disassembly"/>
    <property type="evidence" value="ECO:0007669"/>
    <property type="project" value="TreeGrafter"/>
</dbReference>
<dbReference type="CDD" id="cd01886">
    <property type="entry name" value="EF-G"/>
    <property type="match status" value="1"/>
</dbReference>
<dbReference type="CDD" id="cd16262">
    <property type="entry name" value="EFG_III"/>
    <property type="match status" value="1"/>
</dbReference>
<dbReference type="CDD" id="cd01434">
    <property type="entry name" value="EFG_mtEFG1_IV"/>
    <property type="match status" value="1"/>
</dbReference>
<dbReference type="CDD" id="cd03713">
    <property type="entry name" value="EFG_mtEFG_C"/>
    <property type="match status" value="1"/>
</dbReference>
<dbReference type="CDD" id="cd04088">
    <property type="entry name" value="EFG_mtEFG_II"/>
    <property type="match status" value="1"/>
</dbReference>
<dbReference type="FunFam" id="2.40.30.10:FF:000006">
    <property type="entry name" value="Elongation factor G"/>
    <property type="match status" value="1"/>
</dbReference>
<dbReference type="FunFam" id="3.30.70.240:FF:000001">
    <property type="entry name" value="Elongation factor G"/>
    <property type="match status" value="1"/>
</dbReference>
<dbReference type="FunFam" id="3.30.70.870:FF:000001">
    <property type="entry name" value="Elongation factor G"/>
    <property type="match status" value="1"/>
</dbReference>
<dbReference type="FunFam" id="3.40.50.300:FF:000029">
    <property type="entry name" value="Elongation factor G"/>
    <property type="match status" value="1"/>
</dbReference>
<dbReference type="Gene3D" id="3.30.230.10">
    <property type="match status" value="1"/>
</dbReference>
<dbReference type="Gene3D" id="3.30.70.240">
    <property type="match status" value="1"/>
</dbReference>
<dbReference type="Gene3D" id="3.30.70.870">
    <property type="entry name" value="Elongation Factor G (Translational Gtpase), domain 3"/>
    <property type="match status" value="1"/>
</dbReference>
<dbReference type="Gene3D" id="3.40.50.300">
    <property type="entry name" value="P-loop containing nucleotide triphosphate hydrolases"/>
    <property type="match status" value="1"/>
</dbReference>
<dbReference type="Gene3D" id="2.40.30.10">
    <property type="entry name" value="Translation factors"/>
    <property type="match status" value="1"/>
</dbReference>
<dbReference type="HAMAP" id="MF_00054_B">
    <property type="entry name" value="EF_G_EF_2_B"/>
    <property type="match status" value="1"/>
</dbReference>
<dbReference type="InterPro" id="IPR041095">
    <property type="entry name" value="EFG_II"/>
</dbReference>
<dbReference type="InterPro" id="IPR009022">
    <property type="entry name" value="EFG_III"/>
</dbReference>
<dbReference type="InterPro" id="IPR035647">
    <property type="entry name" value="EFG_III/V"/>
</dbReference>
<dbReference type="InterPro" id="IPR047872">
    <property type="entry name" value="EFG_IV"/>
</dbReference>
<dbReference type="InterPro" id="IPR035649">
    <property type="entry name" value="EFG_V"/>
</dbReference>
<dbReference type="InterPro" id="IPR000640">
    <property type="entry name" value="EFG_V-like"/>
</dbReference>
<dbReference type="InterPro" id="IPR004161">
    <property type="entry name" value="EFTu-like_2"/>
</dbReference>
<dbReference type="InterPro" id="IPR031157">
    <property type="entry name" value="G_TR_CS"/>
</dbReference>
<dbReference type="InterPro" id="IPR027417">
    <property type="entry name" value="P-loop_NTPase"/>
</dbReference>
<dbReference type="InterPro" id="IPR020568">
    <property type="entry name" value="Ribosomal_Su5_D2-typ_SF"/>
</dbReference>
<dbReference type="InterPro" id="IPR014721">
    <property type="entry name" value="Ribsml_uS5_D2-typ_fold_subgr"/>
</dbReference>
<dbReference type="InterPro" id="IPR005225">
    <property type="entry name" value="Small_GTP-bd"/>
</dbReference>
<dbReference type="InterPro" id="IPR000795">
    <property type="entry name" value="T_Tr_GTP-bd_dom"/>
</dbReference>
<dbReference type="InterPro" id="IPR009000">
    <property type="entry name" value="Transl_B-barrel_sf"/>
</dbReference>
<dbReference type="InterPro" id="IPR004540">
    <property type="entry name" value="Transl_elong_EFG/EF2"/>
</dbReference>
<dbReference type="InterPro" id="IPR005517">
    <property type="entry name" value="Transl_elong_EFG/EF2_IV"/>
</dbReference>
<dbReference type="NCBIfam" id="TIGR00484">
    <property type="entry name" value="EF-G"/>
    <property type="match status" value="1"/>
</dbReference>
<dbReference type="NCBIfam" id="NF009381">
    <property type="entry name" value="PRK12740.1-5"/>
    <property type="match status" value="1"/>
</dbReference>
<dbReference type="NCBIfam" id="TIGR00231">
    <property type="entry name" value="small_GTP"/>
    <property type="match status" value="1"/>
</dbReference>
<dbReference type="PANTHER" id="PTHR43261:SF1">
    <property type="entry name" value="RIBOSOME-RELEASING FACTOR 2, MITOCHONDRIAL"/>
    <property type="match status" value="1"/>
</dbReference>
<dbReference type="PANTHER" id="PTHR43261">
    <property type="entry name" value="TRANSLATION ELONGATION FACTOR G-RELATED"/>
    <property type="match status" value="1"/>
</dbReference>
<dbReference type="Pfam" id="PF00679">
    <property type="entry name" value="EFG_C"/>
    <property type="match status" value="1"/>
</dbReference>
<dbReference type="Pfam" id="PF14492">
    <property type="entry name" value="EFG_III"/>
    <property type="match status" value="1"/>
</dbReference>
<dbReference type="Pfam" id="PF03764">
    <property type="entry name" value="EFG_IV"/>
    <property type="match status" value="1"/>
</dbReference>
<dbReference type="Pfam" id="PF00009">
    <property type="entry name" value="GTP_EFTU"/>
    <property type="match status" value="1"/>
</dbReference>
<dbReference type="Pfam" id="PF03144">
    <property type="entry name" value="GTP_EFTU_D2"/>
    <property type="match status" value="1"/>
</dbReference>
<dbReference type="PRINTS" id="PR00315">
    <property type="entry name" value="ELONGATNFCT"/>
</dbReference>
<dbReference type="SMART" id="SM00838">
    <property type="entry name" value="EFG_C"/>
    <property type="match status" value="1"/>
</dbReference>
<dbReference type="SMART" id="SM00889">
    <property type="entry name" value="EFG_IV"/>
    <property type="match status" value="1"/>
</dbReference>
<dbReference type="SUPFAM" id="SSF54980">
    <property type="entry name" value="EF-G C-terminal domain-like"/>
    <property type="match status" value="2"/>
</dbReference>
<dbReference type="SUPFAM" id="SSF52540">
    <property type="entry name" value="P-loop containing nucleoside triphosphate hydrolases"/>
    <property type="match status" value="1"/>
</dbReference>
<dbReference type="SUPFAM" id="SSF54211">
    <property type="entry name" value="Ribosomal protein S5 domain 2-like"/>
    <property type="match status" value="1"/>
</dbReference>
<dbReference type="SUPFAM" id="SSF50447">
    <property type="entry name" value="Translation proteins"/>
    <property type="match status" value="1"/>
</dbReference>
<dbReference type="PROSITE" id="PS00301">
    <property type="entry name" value="G_TR_1"/>
    <property type="match status" value="1"/>
</dbReference>
<dbReference type="PROSITE" id="PS51722">
    <property type="entry name" value="G_TR_2"/>
    <property type="match status" value="1"/>
</dbReference>
<gene>
    <name evidence="1" type="primary">fusA2</name>
    <name type="ordered locus">Swol_2336</name>
</gene>
<reference key="1">
    <citation type="journal article" date="2010" name="Environ. Microbiol.">
        <title>The genome of Syntrophomonas wolfei: new insights into syntrophic metabolism and biohydrogen production.</title>
        <authorList>
            <person name="Sieber J.R."/>
            <person name="Sims D.R."/>
            <person name="Han C."/>
            <person name="Kim E."/>
            <person name="Lykidis A."/>
            <person name="Lapidus A.L."/>
            <person name="McDonnald E."/>
            <person name="Rohlin L."/>
            <person name="Culley D.E."/>
            <person name="Gunsalus R."/>
            <person name="McInerney M.J."/>
        </authorList>
    </citation>
    <scope>NUCLEOTIDE SEQUENCE [LARGE SCALE GENOMIC DNA]</scope>
    <source>
        <strain>DSM 2245B / Goettingen</strain>
    </source>
</reference>
<feature type="chain" id="PRO_0000263527" description="Elongation factor G 2">
    <location>
        <begin position="1"/>
        <end position="694"/>
    </location>
</feature>
<feature type="domain" description="tr-type G">
    <location>
        <begin position="8"/>
        <end position="282"/>
    </location>
</feature>
<feature type="binding site" evidence="1">
    <location>
        <begin position="17"/>
        <end position="24"/>
    </location>
    <ligand>
        <name>GTP</name>
        <dbReference type="ChEBI" id="CHEBI:37565"/>
    </ligand>
</feature>
<feature type="binding site" evidence="1">
    <location>
        <begin position="81"/>
        <end position="85"/>
    </location>
    <ligand>
        <name>GTP</name>
        <dbReference type="ChEBI" id="CHEBI:37565"/>
    </ligand>
</feature>
<feature type="binding site" evidence="1">
    <location>
        <begin position="135"/>
        <end position="138"/>
    </location>
    <ligand>
        <name>GTP</name>
        <dbReference type="ChEBI" id="CHEBI:37565"/>
    </ligand>
</feature>
<keyword id="KW-0963">Cytoplasm</keyword>
<keyword id="KW-0251">Elongation factor</keyword>
<keyword id="KW-0342">GTP-binding</keyword>
<keyword id="KW-0547">Nucleotide-binding</keyword>
<keyword id="KW-0648">Protein biosynthesis</keyword>
<keyword id="KW-1185">Reference proteome</keyword>
<name>EFG2_SYNWW</name>